<evidence type="ECO:0000250" key="1"/>
<evidence type="ECO:0000250" key="2">
    <source>
        <dbReference type="UniProtKB" id="P20073"/>
    </source>
</evidence>
<evidence type="ECO:0000255" key="3">
    <source>
        <dbReference type="PROSITE-ProRule" id="PRU01245"/>
    </source>
</evidence>
<evidence type="ECO:0000256" key="4">
    <source>
        <dbReference type="SAM" id="MobiDB-lite"/>
    </source>
</evidence>
<evidence type="ECO:0000305" key="5"/>
<reference key="1">
    <citation type="submission" date="2005-06" db="EMBL/GenBank/DDBJ databases">
        <title>DNA sequences of macaque genes expressed in brain or testis and its evolutionary implications.</title>
        <authorList>
            <consortium name="International consortium for macaque cDNA sequencing and analysis"/>
        </authorList>
    </citation>
    <scope>NUCLEOTIDE SEQUENCE [LARGE SCALE MRNA]</scope>
    <source>
        <tissue>Brain cortex</tissue>
    </source>
</reference>
<accession>Q4R5L5</accession>
<proteinExistence type="evidence at transcript level"/>
<dbReference type="EMBL" id="AB169528">
    <property type="protein sequence ID" value="BAE01610.1"/>
    <property type="molecule type" value="mRNA"/>
</dbReference>
<dbReference type="RefSeq" id="NP_001271996.1">
    <property type="nucleotide sequence ID" value="NM_001285067.1"/>
</dbReference>
<dbReference type="SMR" id="Q4R5L5"/>
<dbReference type="STRING" id="9541.ENSMFAP00000024229"/>
<dbReference type="eggNOG" id="KOG0819">
    <property type="taxonomic scope" value="Eukaryota"/>
</dbReference>
<dbReference type="Proteomes" id="UP000233100">
    <property type="component" value="Unplaced"/>
</dbReference>
<dbReference type="GO" id="GO:0005737">
    <property type="term" value="C:cytoplasm"/>
    <property type="evidence" value="ECO:0007669"/>
    <property type="project" value="TreeGrafter"/>
</dbReference>
<dbReference type="GO" id="GO:0005634">
    <property type="term" value="C:nucleus"/>
    <property type="evidence" value="ECO:0007669"/>
    <property type="project" value="TreeGrafter"/>
</dbReference>
<dbReference type="GO" id="GO:0005886">
    <property type="term" value="C:plasma membrane"/>
    <property type="evidence" value="ECO:0007669"/>
    <property type="project" value="TreeGrafter"/>
</dbReference>
<dbReference type="GO" id="GO:0012506">
    <property type="term" value="C:vesicle membrane"/>
    <property type="evidence" value="ECO:0007669"/>
    <property type="project" value="TreeGrafter"/>
</dbReference>
<dbReference type="GO" id="GO:0005509">
    <property type="term" value="F:calcium ion binding"/>
    <property type="evidence" value="ECO:0007669"/>
    <property type="project" value="InterPro"/>
</dbReference>
<dbReference type="GO" id="GO:0005544">
    <property type="term" value="F:calcium-dependent phospholipid binding"/>
    <property type="evidence" value="ECO:0007669"/>
    <property type="project" value="UniProtKB-KW"/>
</dbReference>
<dbReference type="GO" id="GO:0001786">
    <property type="term" value="F:phosphatidylserine binding"/>
    <property type="evidence" value="ECO:0007669"/>
    <property type="project" value="TreeGrafter"/>
</dbReference>
<dbReference type="FunFam" id="1.10.220.10:FF:000001">
    <property type="entry name" value="Annexin"/>
    <property type="match status" value="1"/>
</dbReference>
<dbReference type="FunFam" id="1.10.220.10:FF:000002">
    <property type="entry name" value="Annexin"/>
    <property type="match status" value="1"/>
</dbReference>
<dbReference type="FunFam" id="1.10.220.10:FF:000003">
    <property type="entry name" value="Annexin"/>
    <property type="match status" value="1"/>
</dbReference>
<dbReference type="FunFam" id="1.10.220.10:FF:000004">
    <property type="entry name" value="Annexin"/>
    <property type="match status" value="1"/>
</dbReference>
<dbReference type="Gene3D" id="1.10.220.10">
    <property type="entry name" value="Annexin"/>
    <property type="match status" value="4"/>
</dbReference>
<dbReference type="InterPro" id="IPR001464">
    <property type="entry name" value="Annexin"/>
</dbReference>
<dbReference type="InterPro" id="IPR018502">
    <property type="entry name" value="Annexin_repeat"/>
</dbReference>
<dbReference type="InterPro" id="IPR018252">
    <property type="entry name" value="Annexin_repeat_CS"/>
</dbReference>
<dbReference type="InterPro" id="IPR037104">
    <property type="entry name" value="Annexin_sf"/>
</dbReference>
<dbReference type="PANTHER" id="PTHR10502">
    <property type="entry name" value="ANNEXIN"/>
    <property type="match status" value="1"/>
</dbReference>
<dbReference type="PANTHER" id="PTHR10502:SF239">
    <property type="entry name" value="ANNEXIN A7"/>
    <property type="match status" value="1"/>
</dbReference>
<dbReference type="Pfam" id="PF00191">
    <property type="entry name" value="Annexin"/>
    <property type="match status" value="4"/>
</dbReference>
<dbReference type="PRINTS" id="PR00196">
    <property type="entry name" value="ANNEXIN"/>
</dbReference>
<dbReference type="PRINTS" id="PR01871">
    <property type="entry name" value="ANNEXINVII"/>
</dbReference>
<dbReference type="SMART" id="SM00335">
    <property type="entry name" value="ANX"/>
    <property type="match status" value="4"/>
</dbReference>
<dbReference type="SUPFAM" id="SSF47874">
    <property type="entry name" value="Annexin"/>
    <property type="match status" value="1"/>
</dbReference>
<dbReference type="PROSITE" id="PS00223">
    <property type="entry name" value="ANNEXIN_1"/>
    <property type="match status" value="4"/>
</dbReference>
<dbReference type="PROSITE" id="PS51897">
    <property type="entry name" value="ANNEXIN_2"/>
    <property type="match status" value="4"/>
</dbReference>
<name>ANXA7_MACFA</name>
<gene>
    <name type="primary">ANXA7</name>
    <name type="ORF">QccE-14346</name>
</gene>
<sequence>MSYPGYPPTGYPPFPGYPPAGQESSFPPSGQYPYPSGFPPMGGGAYPQVPSSGYPGAGGYPAPGGYPAPGGYPGAPQPGGAPSYPGVPPGQGFGVPPGGAGFSGYPQPPSQSYGGGPAQVPLPGGFPGGQMPSQYPGGQPTYPSQINTESFPSYPVFSPVSLDYSSEPAAMTQGTQGTIRPAANFDAMRDAEILRKAMKGFGTDEQAIVDVVANRSNDQRQKIKAAFKTSYGKDLIKDLKSELSGNMEELILALFMPPTYYDAWTLRKAMQGAGTQERVLIEILCTRTNQEIREIVRCYQSEFGRDLEKDIRSDTSGHFERLLVSMCQGNRDENQSVNHQMAQEDAQRLYQAGEGRLGTDESCFNMILATRSFPQLRATMEAYSRMANRDLLSSVSREFSGYVESGLKTILQCALNRPAFFAERLYYAMKGAGTDDSTLVRIVVTRSEIDLVQIKQMFAQMYQKTLGTMIAGDTSGDYRRPLLAIVGQ</sequence>
<comment type="function">
    <text evidence="1">Calcium/phospholipid-binding protein which promotes membrane fusion and is involved in exocytosis.</text>
</comment>
<comment type="subunit">
    <text evidence="1">Interacts with PDCD6.</text>
</comment>
<comment type="domain">
    <text evidence="1">A pair of annexin repeats may form one binding site for calcium and phospholipid.</text>
</comment>
<comment type="similarity">
    <text evidence="3 5">Belongs to the annexin family.</text>
</comment>
<organism>
    <name type="scientific">Macaca fascicularis</name>
    <name type="common">Crab-eating macaque</name>
    <name type="synonym">Cynomolgus monkey</name>
    <dbReference type="NCBI Taxonomy" id="9541"/>
    <lineage>
        <taxon>Eukaryota</taxon>
        <taxon>Metazoa</taxon>
        <taxon>Chordata</taxon>
        <taxon>Craniata</taxon>
        <taxon>Vertebrata</taxon>
        <taxon>Euteleostomi</taxon>
        <taxon>Mammalia</taxon>
        <taxon>Eutheria</taxon>
        <taxon>Euarchontoglires</taxon>
        <taxon>Primates</taxon>
        <taxon>Haplorrhini</taxon>
        <taxon>Catarrhini</taxon>
        <taxon>Cercopithecidae</taxon>
        <taxon>Cercopithecinae</taxon>
        <taxon>Macaca</taxon>
    </lineage>
</organism>
<protein>
    <recommendedName>
        <fullName>Annexin A7</fullName>
    </recommendedName>
    <alternativeName>
        <fullName>Annexin VII</fullName>
    </alternativeName>
    <alternativeName>
        <fullName>Annexin-7</fullName>
    </alternativeName>
</protein>
<feature type="chain" id="PRO_0000236215" description="Annexin A7">
    <location>
        <begin position="1"/>
        <end position="488"/>
    </location>
</feature>
<feature type="repeat" description="Annexin 1" evidence="3">
    <location>
        <begin position="185"/>
        <end position="256"/>
    </location>
</feature>
<feature type="repeat" description="Annexin 2" evidence="3">
    <location>
        <begin position="257"/>
        <end position="328"/>
    </location>
</feature>
<feature type="repeat" description="Annexin 3" evidence="3">
    <location>
        <begin position="340"/>
        <end position="412"/>
    </location>
</feature>
<feature type="repeat" description="Annexin 4" evidence="3">
    <location>
        <begin position="416"/>
        <end position="487"/>
    </location>
</feature>
<feature type="region of interest" description="Repeat-rich region">
    <location>
        <begin position="1"/>
        <end position="143"/>
    </location>
</feature>
<feature type="region of interest" description="Disordered" evidence="4">
    <location>
        <begin position="1"/>
        <end position="49"/>
    </location>
</feature>
<feature type="region of interest" description="3 X 5 AA tandem repeats of G-Y-P-P-X">
    <location>
        <begin position="5"/>
        <end position="20"/>
    </location>
</feature>
<feature type="region of interest" description="Disordered" evidence="4">
    <location>
        <begin position="71"/>
        <end position="150"/>
    </location>
</feature>
<feature type="compositionally biased region" description="Pro residues" evidence="4">
    <location>
        <begin position="1"/>
        <end position="18"/>
    </location>
</feature>
<feature type="compositionally biased region" description="Gly residues" evidence="4">
    <location>
        <begin position="89"/>
        <end position="102"/>
    </location>
</feature>
<feature type="modified residue" description="N6-acetyllysine" evidence="2">
    <location>
        <position position="233"/>
    </location>
</feature>
<keyword id="KW-0007">Acetylation</keyword>
<keyword id="KW-0041">Annexin</keyword>
<keyword id="KW-0106">Calcium</keyword>
<keyword id="KW-0111">Calcium/phospholipid-binding</keyword>
<keyword id="KW-1185">Reference proteome</keyword>
<keyword id="KW-0677">Repeat</keyword>